<comment type="function">
    <text evidence="1">Catalyzes the deamination of various vicinal amino-alcohols to oxo compounds. Allows this organism to utilize ethanolamine as the sole source of nitrogen and carbon in the presence of external vitamin B12.</text>
</comment>
<comment type="catalytic activity">
    <reaction evidence="1">
        <text>ethanolamine = acetaldehyde + NH4(+)</text>
        <dbReference type="Rhea" id="RHEA:15313"/>
        <dbReference type="ChEBI" id="CHEBI:15343"/>
        <dbReference type="ChEBI" id="CHEBI:28938"/>
        <dbReference type="ChEBI" id="CHEBI:57603"/>
        <dbReference type="EC" id="4.3.1.7"/>
    </reaction>
</comment>
<comment type="cofactor">
    <cofactor evidence="1">
        <name>adenosylcob(III)alamin</name>
        <dbReference type="ChEBI" id="CHEBI:18408"/>
    </cofactor>
    <text evidence="1">Binds between the large and small subunits.</text>
</comment>
<comment type="pathway">
    <text evidence="1">Amine and polyamine degradation; ethanolamine degradation.</text>
</comment>
<comment type="subunit">
    <text evidence="1">The basic unit is a heterodimer which dimerizes to form tetramers. The heterotetramers trimerize; 6 large subunits form a core ring with 6 small subunits projecting outwards.</text>
</comment>
<comment type="subcellular location">
    <subcellularLocation>
        <location evidence="1">Bacterial microcompartment</location>
    </subcellularLocation>
</comment>
<comment type="similarity">
    <text evidence="1">Belongs to the EutC family.</text>
</comment>
<reference key="1">
    <citation type="journal article" date="2002" name="Nature">
        <title>Comparison of the genomes of two Xanthomonas pathogens with differing host specificities.</title>
        <authorList>
            <person name="da Silva A.C.R."/>
            <person name="Ferro J.A."/>
            <person name="Reinach F.C."/>
            <person name="Farah C.S."/>
            <person name="Furlan L.R."/>
            <person name="Quaggio R.B."/>
            <person name="Monteiro-Vitorello C.B."/>
            <person name="Van Sluys M.A."/>
            <person name="Almeida N.F. Jr."/>
            <person name="Alves L.M.C."/>
            <person name="do Amaral A.M."/>
            <person name="Bertolini M.C."/>
            <person name="Camargo L.E.A."/>
            <person name="Camarotte G."/>
            <person name="Cannavan F."/>
            <person name="Cardozo J."/>
            <person name="Chambergo F."/>
            <person name="Ciapina L.P."/>
            <person name="Cicarelli R.M.B."/>
            <person name="Coutinho L.L."/>
            <person name="Cursino-Santos J.R."/>
            <person name="El-Dorry H."/>
            <person name="Faria J.B."/>
            <person name="Ferreira A.J.S."/>
            <person name="Ferreira R.C.C."/>
            <person name="Ferro M.I.T."/>
            <person name="Formighieri E.F."/>
            <person name="Franco M.C."/>
            <person name="Greggio C.C."/>
            <person name="Gruber A."/>
            <person name="Katsuyama A.M."/>
            <person name="Kishi L.T."/>
            <person name="Leite R.P."/>
            <person name="Lemos E.G.M."/>
            <person name="Lemos M.V.F."/>
            <person name="Locali E.C."/>
            <person name="Machado M.A."/>
            <person name="Madeira A.M.B.N."/>
            <person name="Martinez-Rossi N.M."/>
            <person name="Martins E.C."/>
            <person name="Meidanis J."/>
            <person name="Menck C.F.M."/>
            <person name="Miyaki C.Y."/>
            <person name="Moon D.H."/>
            <person name="Moreira L.M."/>
            <person name="Novo M.T.M."/>
            <person name="Okura V.K."/>
            <person name="Oliveira M.C."/>
            <person name="Oliveira V.R."/>
            <person name="Pereira H.A."/>
            <person name="Rossi A."/>
            <person name="Sena J.A.D."/>
            <person name="Silva C."/>
            <person name="de Souza R.F."/>
            <person name="Spinola L.A.F."/>
            <person name="Takita M.A."/>
            <person name="Tamura R.E."/>
            <person name="Teixeira E.C."/>
            <person name="Tezza R.I.D."/>
            <person name="Trindade dos Santos M."/>
            <person name="Truffi D."/>
            <person name="Tsai S.M."/>
            <person name="White F.F."/>
            <person name="Setubal J.C."/>
            <person name="Kitajima J.P."/>
        </authorList>
    </citation>
    <scope>NUCLEOTIDE SEQUENCE [LARGE SCALE GENOMIC DNA]</scope>
    <source>
        <strain>ATCC 33913 / DSM 3586 / NCPPB 528 / LMG 568 / P 25</strain>
    </source>
</reference>
<feature type="chain" id="PRO_0000206005" description="Ethanolamine ammonia-lyase small subunit">
    <location>
        <begin position="1"/>
        <end position="272"/>
    </location>
</feature>
<feature type="binding site" evidence="1">
    <location>
        <position position="161"/>
    </location>
    <ligand>
        <name>adenosylcob(III)alamin</name>
        <dbReference type="ChEBI" id="CHEBI:18408"/>
    </ligand>
</feature>
<feature type="binding site" evidence="1">
    <location>
        <position position="182"/>
    </location>
    <ligand>
        <name>adenosylcob(III)alamin</name>
        <dbReference type="ChEBI" id="CHEBI:18408"/>
    </ligand>
</feature>
<feature type="binding site" evidence="1">
    <location>
        <position position="211"/>
    </location>
    <ligand>
        <name>adenosylcob(III)alamin</name>
        <dbReference type="ChEBI" id="CHEBI:18408"/>
    </ligand>
</feature>
<organism>
    <name type="scientific">Xanthomonas campestris pv. campestris (strain ATCC 33913 / DSM 3586 / NCPPB 528 / LMG 568 / P 25)</name>
    <dbReference type="NCBI Taxonomy" id="190485"/>
    <lineage>
        <taxon>Bacteria</taxon>
        <taxon>Pseudomonadati</taxon>
        <taxon>Pseudomonadota</taxon>
        <taxon>Gammaproteobacteria</taxon>
        <taxon>Lysobacterales</taxon>
        <taxon>Lysobacteraceae</taxon>
        <taxon>Xanthomonas</taxon>
    </lineage>
</organism>
<evidence type="ECO:0000255" key="1">
    <source>
        <dbReference type="HAMAP-Rule" id="MF_00601"/>
    </source>
</evidence>
<gene>
    <name evidence="1" type="primary">eutC</name>
    <name type="ordered locus">XCC2261</name>
</gene>
<proteinExistence type="inferred from homology"/>
<sequence>MSTPTTPPRDAWARLRALTPARIALGRAGTSLPTASHLEFQLAHAQARDAVHLAFDPAPLQAVLQQRGRRSVLLHSAASDRHLYLQRPDLGRRLSDEAAEQLRGTTAVHGGGADLAVVVADGLSALAVHRHAGAMLEQIDALAAHEGWSLAPVTLIAQGRVAIGDEVGELLQARAVIVLIGERPGLSSPDSLGLYLTYAPRVGHTDAARNCISNIRGEGLSYAEAGHKLGYLLREAFRRKLSGVQLKDEADRPLLGTDTASQAAPRNFLLPE</sequence>
<dbReference type="EC" id="4.3.1.7" evidence="1"/>
<dbReference type="EMBL" id="AE008922">
    <property type="protein sequence ID" value="AAM41540.1"/>
    <property type="molecule type" value="Genomic_DNA"/>
</dbReference>
<dbReference type="RefSeq" id="NP_637616.1">
    <property type="nucleotide sequence ID" value="NC_003902.1"/>
</dbReference>
<dbReference type="RefSeq" id="WP_011037405.1">
    <property type="nucleotide sequence ID" value="NC_003902.1"/>
</dbReference>
<dbReference type="SMR" id="Q8P8I0"/>
<dbReference type="STRING" id="190485.XCC2261"/>
<dbReference type="EnsemblBacteria" id="AAM41540">
    <property type="protein sequence ID" value="AAM41540"/>
    <property type="gene ID" value="XCC2261"/>
</dbReference>
<dbReference type="KEGG" id="xcc:XCC2261"/>
<dbReference type="PATRIC" id="fig|190485.4.peg.2411"/>
<dbReference type="eggNOG" id="COG4302">
    <property type="taxonomic scope" value="Bacteria"/>
</dbReference>
<dbReference type="HOGENOM" id="CLU_068224_1_0_6"/>
<dbReference type="OrthoDB" id="114248at2"/>
<dbReference type="UniPathway" id="UPA00560"/>
<dbReference type="Proteomes" id="UP000001010">
    <property type="component" value="Chromosome"/>
</dbReference>
<dbReference type="GO" id="GO:0009350">
    <property type="term" value="C:ethanolamine ammonia-lyase complex"/>
    <property type="evidence" value="ECO:0000318"/>
    <property type="project" value="GO_Central"/>
</dbReference>
<dbReference type="GO" id="GO:0031471">
    <property type="term" value="C:ethanolamine degradation polyhedral organelle"/>
    <property type="evidence" value="ECO:0007669"/>
    <property type="project" value="UniProtKB-UniRule"/>
</dbReference>
<dbReference type="GO" id="GO:0031419">
    <property type="term" value="F:cobalamin binding"/>
    <property type="evidence" value="ECO:0007669"/>
    <property type="project" value="UniProtKB-UniRule"/>
</dbReference>
<dbReference type="GO" id="GO:0008851">
    <property type="term" value="F:ethanolamine ammonia-lyase activity"/>
    <property type="evidence" value="ECO:0007669"/>
    <property type="project" value="UniProtKB-UniRule"/>
</dbReference>
<dbReference type="GO" id="GO:0006520">
    <property type="term" value="P:amino acid metabolic process"/>
    <property type="evidence" value="ECO:0007669"/>
    <property type="project" value="InterPro"/>
</dbReference>
<dbReference type="GO" id="GO:0046336">
    <property type="term" value="P:ethanolamine catabolic process"/>
    <property type="evidence" value="ECO:0007669"/>
    <property type="project" value="UniProtKB-UniRule"/>
</dbReference>
<dbReference type="FunFam" id="3.40.50.11240:FF:000001">
    <property type="entry name" value="Ethanolamine ammonia-lyase light chain"/>
    <property type="match status" value="1"/>
</dbReference>
<dbReference type="Gene3D" id="3.40.50.11240">
    <property type="entry name" value="Ethanolamine ammonia-lyase light chain (EutC)"/>
    <property type="match status" value="1"/>
</dbReference>
<dbReference type="Gene3D" id="1.10.30.40">
    <property type="entry name" value="Ethanolamine ammonia-lyase light chain (EutC), N-terminal domain"/>
    <property type="match status" value="1"/>
</dbReference>
<dbReference type="HAMAP" id="MF_00601">
    <property type="entry name" value="EutC"/>
    <property type="match status" value="1"/>
</dbReference>
<dbReference type="InterPro" id="IPR009246">
    <property type="entry name" value="EutC"/>
</dbReference>
<dbReference type="InterPro" id="IPR042251">
    <property type="entry name" value="EutC_C"/>
</dbReference>
<dbReference type="InterPro" id="IPR042255">
    <property type="entry name" value="EutC_N"/>
</dbReference>
<dbReference type="NCBIfam" id="NF003971">
    <property type="entry name" value="PRK05465.1"/>
    <property type="match status" value="1"/>
</dbReference>
<dbReference type="PANTHER" id="PTHR39330">
    <property type="entry name" value="ETHANOLAMINE AMMONIA-LYASE LIGHT CHAIN"/>
    <property type="match status" value="1"/>
</dbReference>
<dbReference type="PANTHER" id="PTHR39330:SF1">
    <property type="entry name" value="ETHANOLAMINE AMMONIA-LYASE SMALL SUBUNIT"/>
    <property type="match status" value="1"/>
</dbReference>
<dbReference type="Pfam" id="PF05985">
    <property type="entry name" value="EutC"/>
    <property type="match status" value="1"/>
</dbReference>
<dbReference type="PIRSF" id="PIRSF018982">
    <property type="entry name" value="EutC"/>
    <property type="match status" value="1"/>
</dbReference>
<protein>
    <recommendedName>
        <fullName evidence="1">Ethanolamine ammonia-lyase small subunit</fullName>
        <shortName evidence="1">EAL small subunit</shortName>
        <ecNumber evidence="1">4.3.1.7</ecNumber>
    </recommendedName>
</protein>
<accession>Q8P8I0</accession>
<keyword id="KW-1283">Bacterial microcompartment</keyword>
<keyword id="KW-0846">Cobalamin</keyword>
<keyword id="KW-0170">Cobalt</keyword>
<keyword id="KW-0456">Lyase</keyword>
<keyword id="KW-1185">Reference proteome</keyword>
<name>EUTC_XANCP</name>